<reference key="1">
    <citation type="journal article" date="2004" name="Genome Res.">
        <title>The genomic sequence and comparative analysis of the rat major histocompatibility complex.</title>
        <authorList>
            <person name="Hurt P."/>
            <person name="Walter L."/>
            <person name="Sudbrak R."/>
            <person name="Klages S."/>
            <person name="Mueller I."/>
            <person name="Shiina T."/>
            <person name="Inoko H."/>
            <person name="Lehrach H."/>
            <person name="Guenther E."/>
            <person name="Reinhardt R."/>
            <person name="Himmelbauer H."/>
        </authorList>
    </citation>
    <scope>NUCLEOTIDE SEQUENCE [LARGE SCALE GENOMIC DNA]</scope>
    <source>
        <strain>Brown Norway</strain>
    </source>
</reference>
<reference key="2">
    <citation type="journal article" date="2004" name="Nature">
        <title>Genome sequence of the Brown Norway rat yields insights into mammalian evolution.</title>
        <authorList>
            <person name="Gibbs R.A."/>
            <person name="Weinstock G.M."/>
            <person name="Metzker M.L."/>
            <person name="Muzny D.M."/>
            <person name="Sodergren E.J."/>
            <person name="Scherer S."/>
            <person name="Scott G."/>
            <person name="Steffen D."/>
            <person name="Worley K.C."/>
            <person name="Burch P.E."/>
            <person name="Okwuonu G."/>
            <person name="Hines S."/>
            <person name="Lewis L."/>
            <person name="Deramo C."/>
            <person name="Delgado O."/>
            <person name="Dugan-Rocha S."/>
            <person name="Miner G."/>
            <person name="Morgan M."/>
            <person name="Hawes A."/>
            <person name="Gill R."/>
            <person name="Holt R.A."/>
            <person name="Adams M.D."/>
            <person name="Amanatides P.G."/>
            <person name="Baden-Tillson H."/>
            <person name="Barnstead M."/>
            <person name="Chin S."/>
            <person name="Evans C.A."/>
            <person name="Ferriera S."/>
            <person name="Fosler C."/>
            <person name="Glodek A."/>
            <person name="Gu Z."/>
            <person name="Jennings D."/>
            <person name="Kraft C.L."/>
            <person name="Nguyen T."/>
            <person name="Pfannkoch C.M."/>
            <person name="Sitter C."/>
            <person name="Sutton G.G."/>
            <person name="Venter J.C."/>
            <person name="Woodage T."/>
            <person name="Smith D."/>
            <person name="Lee H.-M."/>
            <person name="Gustafson E."/>
            <person name="Cahill P."/>
            <person name="Kana A."/>
            <person name="Doucette-Stamm L."/>
            <person name="Weinstock K."/>
            <person name="Fechtel K."/>
            <person name="Weiss R.B."/>
            <person name="Dunn D.M."/>
            <person name="Green E.D."/>
            <person name="Blakesley R.W."/>
            <person name="Bouffard G.G."/>
            <person name="De Jong P.J."/>
            <person name="Osoegawa K."/>
            <person name="Zhu B."/>
            <person name="Marra M."/>
            <person name="Schein J."/>
            <person name="Bosdet I."/>
            <person name="Fjell C."/>
            <person name="Jones S."/>
            <person name="Krzywinski M."/>
            <person name="Mathewson C."/>
            <person name="Siddiqui A."/>
            <person name="Wye N."/>
            <person name="McPherson J."/>
            <person name="Zhao S."/>
            <person name="Fraser C.M."/>
            <person name="Shetty J."/>
            <person name="Shatsman S."/>
            <person name="Geer K."/>
            <person name="Chen Y."/>
            <person name="Abramzon S."/>
            <person name="Nierman W.C."/>
            <person name="Havlak P.H."/>
            <person name="Chen R."/>
            <person name="Durbin K.J."/>
            <person name="Egan A."/>
            <person name="Ren Y."/>
            <person name="Song X.-Z."/>
            <person name="Li B."/>
            <person name="Liu Y."/>
            <person name="Qin X."/>
            <person name="Cawley S."/>
            <person name="Cooney A.J."/>
            <person name="D'Souza L.M."/>
            <person name="Martin K."/>
            <person name="Wu J.Q."/>
            <person name="Gonzalez-Garay M.L."/>
            <person name="Jackson A.R."/>
            <person name="Kalafus K.J."/>
            <person name="McLeod M.P."/>
            <person name="Milosavljevic A."/>
            <person name="Virk D."/>
            <person name="Volkov A."/>
            <person name="Wheeler D.A."/>
            <person name="Zhang Z."/>
            <person name="Bailey J.A."/>
            <person name="Eichler E.E."/>
            <person name="Tuzun E."/>
            <person name="Birney E."/>
            <person name="Mongin E."/>
            <person name="Ureta-Vidal A."/>
            <person name="Woodwark C."/>
            <person name="Zdobnov E."/>
            <person name="Bork P."/>
            <person name="Suyama M."/>
            <person name="Torrents D."/>
            <person name="Alexandersson M."/>
            <person name="Trask B.J."/>
            <person name="Young J.M."/>
            <person name="Huang H."/>
            <person name="Wang H."/>
            <person name="Xing H."/>
            <person name="Daniels S."/>
            <person name="Gietzen D."/>
            <person name="Schmidt J."/>
            <person name="Stevens K."/>
            <person name="Vitt U."/>
            <person name="Wingrove J."/>
            <person name="Camara F."/>
            <person name="Mar Alba M."/>
            <person name="Abril J.F."/>
            <person name="Guigo R."/>
            <person name="Smit A."/>
            <person name="Dubchak I."/>
            <person name="Rubin E.M."/>
            <person name="Couronne O."/>
            <person name="Poliakov A."/>
            <person name="Huebner N."/>
            <person name="Ganten D."/>
            <person name="Goesele C."/>
            <person name="Hummel O."/>
            <person name="Kreitler T."/>
            <person name="Lee Y.-A."/>
            <person name="Monti J."/>
            <person name="Schulz H."/>
            <person name="Zimdahl H."/>
            <person name="Himmelbauer H."/>
            <person name="Lehrach H."/>
            <person name="Jacob H.J."/>
            <person name="Bromberg S."/>
            <person name="Gullings-Handley J."/>
            <person name="Jensen-Seaman M.I."/>
            <person name="Kwitek A.E."/>
            <person name="Lazar J."/>
            <person name="Pasko D."/>
            <person name="Tonellato P.J."/>
            <person name="Twigger S."/>
            <person name="Ponting C.P."/>
            <person name="Duarte J.M."/>
            <person name="Rice S."/>
            <person name="Goodstadt L."/>
            <person name="Beatson S.A."/>
            <person name="Emes R.D."/>
            <person name="Winter E.E."/>
            <person name="Webber C."/>
            <person name="Brandt P."/>
            <person name="Nyakatura G."/>
            <person name="Adetobi M."/>
            <person name="Chiaromonte F."/>
            <person name="Elnitski L."/>
            <person name="Eswara P."/>
            <person name="Hardison R.C."/>
            <person name="Hou M."/>
            <person name="Kolbe D."/>
            <person name="Makova K."/>
            <person name="Miller W."/>
            <person name="Nekrutenko A."/>
            <person name="Riemer C."/>
            <person name="Schwartz S."/>
            <person name="Taylor J."/>
            <person name="Yang S."/>
            <person name="Zhang Y."/>
            <person name="Lindpaintner K."/>
            <person name="Andrews T.D."/>
            <person name="Caccamo M."/>
            <person name="Clamp M."/>
            <person name="Clarke L."/>
            <person name="Curwen V."/>
            <person name="Durbin R.M."/>
            <person name="Eyras E."/>
            <person name="Searle S.M."/>
            <person name="Cooper G.M."/>
            <person name="Batzoglou S."/>
            <person name="Brudno M."/>
            <person name="Sidow A."/>
            <person name="Stone E.A."/>
            <person name="Payseur B.A."/>
            <person name="Bourque G."/>
            <person name="Lopez-Otin C."/>
            <person name="Puente X.S."/>
            <person name="Chakrabarti K."/>
            <person name="Chatterji S."/>
            <person name="Dewey C."/>
            <person name="Pachter L."/>
            <person name="Bray N."/>
            <person name="Yap V.B."/>
            <person name="Caspi A."/>
            <person name="Tesler G."/>
            <person name="Pevzner P.A."/>
            <person name="Haussler D."/>
            <person name="Roskin K.M."/>
            <person name="Baertsch R."/>
            <person name="Clawson H."/>
            <person name="Furey T.S."/>
            <person name="Hinrichs A.S."/>
            <person name="Karolchik D."/>
            <person name="Kent W.J."/>
            <person name="Rosenbloom K.R."/>
            <person name="Trumbower H."/>
            <person name="Weirauch M."/>
            <person name="Cooper D.N."/>
            <person name="Stenson P.D."/>
            <person name="Ma B."/>
            <person name="Brent M."/>
            <person name="Arumugam M."/>
            <person name="Shteynberg D."/>
            <person name="Copley R.R."/>
            <person name="Taylor M.S."/>
            <person name="Riethman H."/>
            <person name="Mudunuri U."/>
            <person name="Peterson J."/>
            <person name="Guyer M."/>
            <person name="Felsenfeld A."/>
            <person name="Old S."/>
            <person name="Mockrin S."/>
            <person name="Collins F.S."/>
        </authorList>
    </citation>
    <scope>NUCLEOTIDE SEQUENCE [LARGE SCALE GENOMIC DNA]</scope>
    <source>
        <strain>Brown Norway</strain>
    </source>
</reference>
<reference key="3">
    <citation type="submission" date="2005-07" db="EMBL/GenBank/DDBJ databases">
        <authorList>
            <person name="Mural R.J."/>
            <person name="Adams M.D."/>
            <person name="Myers E.W."/>
            <person name="Smith H.O."/>
            <person name="Venter J.C."/>
        </authorList>
    </citation>
    <scope>NUCLEOTIDE SEQUENCE [LARGE SCALE GENOMIC DNA]</scope>
</reference>
<reference key="4">
    <citation type="journal article" date="2004" name="Genome Res.">
        <title>The status, quality, and expansion of the NIH full-length cDNA project: the Mammalian Gene Collection (MGC).</title>
        <authorList>
            <consortium name="The MGC Project Team"/>
        </authorList>
    </citation>
    <scope>NUCLEOTIDE SEQUENCE [LARGE SCALE MRNA]</scope>
    <source>
        <tissue>Kidney</tissue>
    </source>
</reference>
<reference key="5">
    <citation type="journal article" date="2017" name="Diabetes">
        <title>Hyperglycemia-Induced Changes in ZIP7 and ZnT7 Expression Cause Zn2+ Release From the Sarco(endo)plasmic Reticulum and Mediate ER Stress in the Heart.</title>
        <authorList>
            <person name="Tuncay E."/>
            <person name="Bitirim V.C."/>
            <person name="Durak A."/>
            <person name="Carrat G.R.J."/>
            <person name="Taylor K.M."/>
            <person name="Rutter G.A."/>
            <person name="Turan B."/>
        </authorList>
    </citation>
    <scope>SUBCELLULAR LOCATION</scope>
    <scope>INDUCTION</scope>
    <scope>PHOSPHORYLATION BY CK2</scope>
    <scope>FUNCTION</scope>
</reference>
<name>S39A7_RAT</name>
<proteinExistence type="evidence at protein level"/>
<dbReference type="EMBL" id="BX883042">
    <property type="protein sequence ID" value="CAE83932.1"/>
    <property type="molecule type" value="Genomic_DNA"/>
</dbReference>
<dbReference type="EMBL" id="AC098547">
    <property type="status" value="NOT_ANNOTATED_CDS"/>
    <property type="molecule type" value="Genomic_DNA"/>
</dbReference>
<dbReference type="EMBL" id="CH473988">
    <property type="protein sequence ID" value="EDL96824.1"/>
    <property type="molecule type" value="Genomic_DNA"/>
</dbReference>
<dbReference type="EMBL" id="BC079141">
    <property type="protein sequence ID" value="AAH79141.1"/>
    <property type="molecule type" value="mRNA"/>
</dbReference>
<dbReference type="RefSeq" id="NP_001008885.1">
    <property type="nucleotide sequence ID" value="NM_001008885.2"/>
</dbReference>
<dbReference type="RefSeq" id="NP_001158216.1">
    <property type="nucleotide sequence ID" value="NM_001164744.1"/>
</dbReference>
<dbReference type="SMR" id="Q6MGB4"/>
<dbReference type="FunCoup" id="Q6MGB4">
    <property type="interactions" value="1726"/>
</dbReference>
<dbReference type="STRING" id="10116.ENSRNOP00000071707"/>
<dbReference type="iPTMnet" id="Q6MGB4"/>
<dbReference type="PhosphoSitePlus" id="Q6MGB4"/>
<dbReference type="PaxDb" id="10116-ENSRNOP00000000541"/>
<dbReference type="GeneID" id="294281"/>
<dbReference type="KEGG" id="rno:294281"/>
<dbReference type="UCSC" id="RGD:1593280">
    <property type="organism name" value="rat"/>
</dbReference>
<dbReference type="AGR" id="RGD:1593280"/>
<dbReference type="CTD" id="7922"/>
<dbReference type="RGD" id="1593280">
    <property type="gene designation" value="Slc39a7"/>
</dbReference>
<dbReference type="VEuPathDB" id="HostDB:ENSRNOG00000000465"/>
<dbReference type="VEuPathDB" id="HostDB:ENSRNOG00000000466"/>
<dbReference type="eggNOG" id="KOG2693">
    <property type="taxonomic scope" value="Eukaryota"/>
</dbReference>
<dbReference type="InParanoid" id="Q6MGB4"/>
<dbReference type="TreeFam" id="TF318470"/>
<dbReference type="PRO" id="PR:Q6MGB4"/>
<dbReference type="Proteomes" id="UP000002494">
    <property type="component" value="Chromosome 20"/>
</dbReference>
<dbReference type="Proteomes" id="UP000234681">
    <property type="component" value="Chromosome 20"/>
</dbReference>
<dbReference type="Bgee" id="ENSRNOG00000000465">
    <property type="expression patterns" value="Expressed in pancreas and 20 other cell types or tissues"/>
</dbReference>
<dbReference type="GO" id="GO:0005783">
    <property type="term" value="C:endoplasmic reticulum"/>
    <property type="evidence" value="ECO:0000266"/>
    <property type="project" value="RGD"/>
</dbReference>
<dbReference type="GO" id="GO:0005789">
    <property type="term" value="C:endoplasmic reticulum membrane"/>
    <property type="evidence" value="ECO:0000266"/>
    <property type="project" value="RGD"/>
</dbReference>
<dbReference type="GO" id="GO:0005794">
    <property type="term" value="C:Golgi apparatus"/>
    <property type="evidence" value="ECO:0007669"/>
    <property type="project" value="UniProtKB-SubCell"/>
</dbReference>
<dbReference type="GO" id="GO:0005385">
    <property type="term" value="F:zinc ion transmembrane transporter activity"/>
    <property type="evidence" value="ECO:0000250"/>
    <property type="project" value="UniProtKB"/>
</dbReference>
<dbReference type="GO" id="GO:0030183">
    <property type="term" value="P:B cell differentiation"/>
    <property type="evidence" value="ECO:0000250"/>
    <property type="project" value="UniProtKB"/>
</dbReference>
<dbReference type="GO" id="GO:0006882">
    <property type="term" value="P:intracellular zinc ion homeostasis"/>
    <property type="evidence" value="ECO:0000250"/>
    <property type="project" value="UniProtKB"/>
</dbReference>
<dbReference type="GO" id="GO:0110075">
    <property type="term" value="P:regulation of ferroptosis"/>
    <property type="evidence" value="ECO:0000250"/>
    <property type="project" value="UniProtKB"/>
</dbReference>
<dbReference type="GO" id="GO:0098773">
    <property type="term" value="P:skin epidermis development"/>
    <property type="evidence" value="ECO:0000250"/>
    <property type="project" value="UniProtKB"/>
</dbReference>
<dbReference type="GO" id="GO:0071577">
    <property type="term" value="P:zinc ion transmembrane transport"/>
    <property type="evidence" value="ECO:0000266"/>
    <property type="project" value="RGD"/>
</dbReference>
<dbReference type="InterPro" id="IPR003689">
    <property type="entry name" value="ZIP"/>
</dbReference>
<dbReference type="PANTHER" id="PTHR16950:SF25">
    <property type="entry name" value="ZINC TRANSPORTER SLC39A7"/>
    <property type="match status" value="1"/>
</dbReference>
<dbReference type="PANTHER" id="PTHR16950">
    <property type="entry name" value="ZINC TRANSPORTER SLC39A7 HISTIDINE-RICH MEMBRANE PROTEIN KE4"/>
    <property type="match status" value="1"/>
</dbReference>
<dbReference type="Pfam" id="PF02535">
    <property type="entry name" value="Zip"/>
    <property type="match status" value="1"/>
</dbReference>
<sequence>MARVLRDPHWVAVGLLTWAALGLLVAGHEGHGDLHRDVEEDFHGHSHGHSHEDFHHGHSHGHGHTHESIWHGHAHSHDHGHSREDVHHGHSHGHSHDSLHHRGHGHSHGASREAGAPGIKHHLDTVTLWAYALGATVLISAAPFFVLFLIPVESNSPRHRSLLQILLSFASGGLLGDAFLHLIPHALEPHSHDTPAQPGHGHSHSGQGPILSVGLWVLSGIVAFLVVEKFVRHVKGGHGHAHAHGHGHSHGDSHAHGHSHAHGDRHECPSKGKPSSEDEKEAGGLRKRRGGDTGPRDGPLKPQNPEEEKTGSDLRVSGYLNLAADLAHNFTDGLAIGASFRGGRGLGILTTMTVLLHEVPHEVGDFAILVQSGCSKKQAMRLQLLTAIGALAGTACALLTEGGAVGSEVAGGAGPGWVLPFTAGGFIYVATVSVLPELLREASPLQSLLEVLGLLGGVAMMVLIAHLE</sequence>
<feature type="chain" id="PRO_0000457973" description="Zinc transporter SLC39A7">
    <location>
        <begin position="1"/>
        <end position="468"/>
    </location>
</feature>
<feature type="transmembrane region" description="Helical" evidence="3">
    <location>
        <begin position="10"/>
        <end position="30"/>
    </location>
</feature>
<feature type="transmembrane region" description="Helical" evidence="3">
    <location>
        <begin position="132"/>
        <end position="152"/>
    </location>
</feature>
<feature type="transmembrane region" description="Helical" evidence="3">
    <location>
        <begin position="163"/>
        <end position="183"/>
    </location>
</feature>
<feature type="transmembrane region" description="Helical" evidence="3">
    <location>
        <begin position="208"/>
        <end position="228"/>
    </location>
</feature>
<feature type="transmembrane region" description="Helical" evidence="3">
    <location>
        <begin position="385"/>
        <end position="405"/>
    </location>
</feature>
<feature type="transmembrane region" description="Helical" evidence="3">
    <location>
        <begin position="409"/>
        <end position="429"/>
    </location>
</feature>
<feature type="transmembrane region" description="Helical" evidence="3">
    <location>
        <begin position="447"/>
        <end position="467"/>
    </location>
</feature>
<feature type="region of interest" description="Disordered" evidence="4">
    <location>
        <begin position="36"/>
        <end position="116"/>
    </location>
</feature>
<feature type="region of interest" description="Disordered" evidence="4">
    <location>
        <begin position="237"/>
        <end position="313"/>
    </location>
</feature>
<feature type="compositionally biased region" description="Basic and acidic residues" evidence="4">
    <location>
        <begin position="36"/>
        <end position="56"/>
    </location>
</feature>
<feature type="compositionally biased region" description="Basic and acidic residues" evidence="4">
    <location>
        <begin position="64"/>
        <end position="100"/>
    </location>
</feature>
<feature type="compositionally biased region" description="Basic residues" evidence="4">
    <location>
        <begin position="237"/>
        <end position="248"/>
    </location>
</feature>
<feature type="compositionally biased region" description="Basic and acidic residues" evidence="4">
    <location>
        <begin position="249"/>
        <end position="312"/>
    </location>
</feature>
<feature type="modified residue" description="Pros-methylhistidine" evidence="1">
    <location>
        <position position="64"/>
    </location>
</feature>
<comment type="function">
    <text evidence="1 2 5">Transports Zn(2+) from the endoplasmic reticulum (ER)/Golgi apparatus to the cytosol, playing an essential role in the regulation of cytosolic zinc levels. Acts as a gatekeeper of zinc release from intracellular stores, requiring post-translational activation by phosphorylation on residues, resulting in activation of multiple downstream pathways leading to cell growth and proliferation. Has an essential role in B cell development and is required for proper B cell receptor signaling (By similarity). Plays an important role in maintaining intestinal epithelial homeostasis and skin dermis development by regulating ER function. Controls cell signaling pathways involved in glucose metabolism in skeletal muscle (By similarity). Has a protective role against ER stress in different biological contexts (PubMed:28232492). Mediates Zn(2+)-induced ferroptosis (By similarity).</text>
</comment>
<comment type="catalytic activity">
    <reaction evidence="1">
        <text>Zn(2+)(in) = Zn(2+)(out)</text>
        <dbReference type="Rhea" id="RHEA:29351"/>
        <dbReference type="ChEBI" id="CHEBI:29105"/>
    </reaction>
</comment>
<comment type="subunit">
    <text evidence="2">Homodimer.</text>
</comment>
<comment type="subcellular location">
    <subcellularLocation>
        <location evidence="5">Endoplasmic reticulum membrane</location>
        <topology evidence="3">Multi-pass membrane protein</topology>
    </subcellularLocation>
    <subcellularLocation>
        <location evidence="5">Golgi apparatus</location>
        <location evidence="5">cis-Golgi network membrane</location>
        <topology evidence="3">Multi-pass membrane protein</topology>
    </subcellularLocation>
</comment>
<comment type="induction">
    <text evidence="5">In cardiomyocytes, high-glucose exposure up-regulated SLC39A7 expression and induced its phosphorylation.</text>
</comment>
<comment type="PTM">
    <text evidence="5">Rapidly phosphorylated by CK2 following Zn(2+) treatment. This phosphorylation is required for efficient cytosolic Zn(2+) release.</text>
</comment>
<comment type="similarity">
    <text evidence="3">Belongs to the ZIP transporter (TC 2.A.5) family. KE4/Catsup subfamily.</text>
</comment>
<evidence type="ECO:0000250" key="1">
    <source>
        <dbReference type="UniProtKB" id="Q31125"/>
    </source>
</evidence>
<evidence type="ECO:0000250" key="2">
    <source>
        <dbReference type="UniProtKB" id="Q92504"/>
    </source>
</evidence>
<evidence type="ECO:0000255" key="3"/>
<evidence type="ECO:0000256" key="4">
    <source>
        <dbReference type="SAM" id="MobiDB-lite"/>
    </source>
</evidence>
<evidence type="ECO:0000269" key="5">
    <source>
    </source>
</evidence>
<evidence type="ECO:0000312" key="6">
    <source>
        <dbReference type="RGD" id="1593280"/>
    </source>
</evidence>
<protein>
    <recommendedName>
        <fullName>Zinc transporter SLC39A7</fullName>
    </recommendedName>
    <alternativeName>
        <fullName>Solute carrier family 39 member 7</fullName>
    </alternativeName>
    <alternativeName>
        <fullName>Zrt-, Irt-like protein 7</fullName>
        <shortName>ZIP7</shortName>
    </alternativeName>
</protein>
<organism>
    <name type="scientific">Rattus norvegicus</name>
    <name type="common">Rat</name>
    <dbReference type="NCBI Taxonomy" id="10116"/>
    <lineage>
        <taxon>Eukaryota</taxon>
        <taxon>Metazoa</taxon>
        <taxon>Chordata</taxon>
        <taxon>Craniata</taxon>
        <taxon>Vertebrata</taxon>
        <taxon>Euteleostomi</taxon>
        <taxon>Mammalia</taxon>
        <taxon>Eutheria</taxon>
        <taxon>Euarchontoglires</taxon>
        <taxon>Glires</taxon>
        <taxon>Rodentia</taxon>
        <taxon>Myomorpha</taxon>
        <taxon>Muroidea</taxon>
        <taxon>Muridae</taxon>
        <taxon>Murinae</taxon>
        <taxon>Rattus</taxon>
    </lineage>
</organism>
<keyword id="KW-0256">Endoplasmic reticulum</keyword>
<keyword id="KW-0333">Golgi apparatus</keyword>
<keyword id="KW-0406">Ion transport</keyword>
<keyword id="KW-0472">Membrane</keyword>
<keyword id="KW-0488">Methylation</keyword>
<keyword id="KW-0597">Phosphoprotein</keyword>
<keyword id="KW-1185">Reference proteome</keyword>
<keyword id="KW-0812">Transmembrane</keyword>
<keyword id="KW-1133">Transmembrane helix</keyword>
<keyword id="KW-0813">Transport</keyword>
<keyword id="KW-0862">Zinc</keyword>
<keyword id="KW-0864">Zinc transport</keyword>
<gene>
    <name evidence="6" type="primary">Slc39a7</name>
</gene>
<accession>Q6MGB4</accession>
<accession>F7EQL7</accession>